<sequence length="316" mass="35688">MTKEFHHVTVLLHETVDMLDIKPDGIYVDATLGGSGHSAYLLSKLGEEGHLYCFDQDQKAIDNAQVTLKSYIDKGQVTFIKDNFRHLKARLTALGVDEIDGILYDLGVSSPQLDERERGFSYKQDAPLDMRMDRQSLLTAYEVVNTYPFNDLVKIFFKYGEDKFSKQIARKIEQARAIKPIETTTELAELIKAAKPAKELKKKGHPAKQIFQAIRIEVNDELGAADESIQDAMELLALDGRISVITFHSLEDRLTKQLFKEASTVDVPKGLPLIPEDMKPKFELVSRKPILPSHSELTANKRAHSAKLRVAKKIRK</sequence>
<gene>
    <name evidence="1" type="primary">rsmH</name>
    <name type="synonym">mraW</name>
    <name type="ordered locus">M28_Spy1410</name>
</gene>
<keyword id="KW-0963">Cytoplasm</keyword>
<keyword id="KW-0489">Methyltransferase</keyword>
<keyword id="KW-0698">rRNA processing</keyword>
<keyword id="KW-0949">S-adenosyl-L-methionine</keyword>
<keyword id="KW-0808">Transferase</keyword>
<name>RSMH_STRPM</name>
<dbReference type="EC" id="2.1.1.199" evidence="1"/>
<dbReference type="EMBL" id="CP000056">
    <property type="protein sequence ID" value="AAX72520.1"/>
    <property type="status" value="ALT_INIT"/>
    <property type="molecule type" value="Genomic_DNA"/>
</dbReference>
<dbReference type="RefSeq" id="WP_002988893.1">
    <property type="nucleotide sequence ID" value="NC_007296.2"/>
</dbReference>
<dbReference type="SMR" id="Q48RZ0"/>
<dbReference type="KEGG" id="spb:M28_Spy1410"/>
<dbReference type="HOGENOM" id="CLU_038422_2_0_9"/>
<dbReference type="GO" id="GO:0005737">
    <property type="term" value="C:cytoplasm"/>
    <property type="evidence" value="ECO:0007669"/>
    <property type="project" value="UniProtKB-SubCell"/>
</dbReference>
<dbReference type="GO" id="GO:0071424">
    <property type="term" value="F:rRNA (cytosine-N4-)-methyltransferase activity"/>
    <property type="evidence" value="ECO:0007669"/>
    <property type="project" value="UniProtKB-UniRule"/>
</dbReference>
<dbReference type="GO" id="GO:0070475">
    <property type="term" value="P:rRNA base methylation"/>
    <property type="evidence" value="ECO:0007669"/>
    <property type="project" value="UniProtKB-UniRule"/>
</dbReference>
<dbReference type="FunFam" id="1.10.150.170:FF:000001">
    <property type="entry name" value="Ribosomal RNA small subunit methyltransferase H"/>
    <property type="match status" value="1"/>
</dbReference>
<dbReference type="Gene3D" id="1.10.150.170">
    <property type="entry name" value="Putative methyltransferase TM0872, insert domain"/>
    <property type="match status" value="1"/>
</dbReference>
<dbReference type="Gene3D" id="3.40.50.150">
    <property type="entry name" value="Vaccinia Virus protein VP39"/>
    <property type="match status" value="1"/>
</dbReference>
<dbReference type="HAMAP" id="MF_01007">
    <property type="entry name" value="16SrRNA_methyltr_H"/>
    <property type="match status" value="1"/>
</dbReference>
<dbReference type="InterPro" id="IPR002903">
    <property type="entry name" value="RsmH"/>
</dbReference>
<dbReference type="InterPro" id="IPR023397">
    <property type="entry name" value="SAM-dep_MeTrfase_MraW_recog"/>
</dbReference>
<dbReference type="InterPro" id="IPR029063">
    <property type="entry name" value="SAM-dependent_MTases_sf"/>
</dbReference>
<dbReference type="NCBIfam" id="TIGR00006">
    <property type="entry name" value="16S rRNA (cytosine(1402)-N(4))-methyltransferase RsmH"/>
    <property type="match status" value="1"/>
</dbReference>
<dbReference type="PANTHER" id="PTHR11265:SF0">
    <property type="entry name" value="12S RRNA N4-METHYLCYTIDINE METHYLTRANSFERASE"/>
    <property type="match status" value="1"/>
</dbReference>
<dbReference type="PANTHER" id="PTHR11265">
    <property type="entry name" value="S-ADENOSYL-METHYLTRANSFERASE MRAW"/>
    <property type="match status" value="1"/>
</dbReference>
<dbReference type="Pfam" id="PF01795">
    <property type="entry name" value="Methyltransf_5"/>
    <property type="match status" value="1"/>
</dbReference>
<dbReference type="PIRSF" id="PIRSF004486">
    <property type="entry name" value="MraW"/>
    <property type="match status" value="1"/>
</dbReference>
<dbReference type="SUPFAM" id="SSF81799">
    <property type="entry name" value="Putative methyltransferase TM0872, insert domain"/>
    <property type="match status" value="1"/>
</dbReference>
<dbReference type="SUPFAM" id="SSF53335">
    <property type="entry name" value="S-adenosyl-L-methionine-dependent methyltransferases"/>
    <property type="match status" value="1"/>
</dbReference>
<comment type="function">
    <text evidence="1">Specifically methylates the N4 position of cytidine in position 1402 (C1402) of 16S rRNA.</text>
</comment>
<comment type="catalytic activity">
    <reaction evidence="1">
        <text>cytidine(1402) in 16S rRNA + S-adenosyl-L-methionine = N(4)-methylcytidine(1402) in 16S rRNA + S-adenosyl-L-homocysteine + H(+)</text>
        <dbReference type="Rhea" id="RHEA:42928"/>
        <dbReference type="Rhea" id="RHEA-COMP:10286"/>
        <dbReference type="Rhea" id="RHEA-COMP:10287"/>
        <dbReference type="ChEBI" id="CHEBI:15378"/>
        <dbReference type="ChEBI" id="CHEBI:57856"/>
        <dbReference type="ChEBI" id="CHEBI:59789"/>
        <dbReference type="ChEBI" id="CHEBI:74506"/>
        <dbReference type="ChEBI" id="CHEBI:82748"/>
        <dbReference type="EC" id="2.1.1.199"/>
    </reaction>
</comment>
<comment type="subcellular location">
    <subcellularLocation>
        <location evidence="1">Cytoplasm</location>
    </subcellularLocation>
</comment>
<comment type="similarity">
    <text evidence="1">Belongs to the methyltransferase superfamily. RsmH family.</text>
</comment>
<comment type="sequence caution" evidence="2">
    <conflict type="erroneous initiation">
        <sequence resource="EMBL-CDS" id="AAX72520"/>
    </conflict>
</comment>
<accession>Q48RZ0</accession>
<evidence type="ECO:0000255" key="1">
    <source>
        <dbReference type="HAMAP-Rule" id="MF_01007"/>
    </source>
</evidence>
<evidence type="ECO:0000305" key="2"/>
<proteinExistence type="inferred from homology"/>
<reference key="1">
    <citation type="journal article" date="2005" name="J. Infect. Dis.">
        <title>Genome sequence of a serotype M28 strain of group A Streptococcus: potential new insights into puerperal sepsis and bacterial disease specificity.</title>
        <authorList>
            <person name="Green N.M."/>
            <person name="Zhang S."/>
            <person name="Porcella S.F."/>
            <person name="Nagiec M.J."/>
            <person name="Barbian K.D."/>
            <person name="Beres S.B."/>
            <person name="Lefebvre R.B."/>
            <person name="Musser J.M."/>
        </authorList>
    </citation>
    <scope>NUCLEOTIDE SEQUENCE [LARGE SCALE GENOMIC DNA]</scope>
    <source>
        <strain>MGAS6180</strain>
    </source>
</reference>
<feature type="chain" id="PRO_0000223569" description="Ribosomal RNA small subunit methyltransferase H">
    <location>
        <begin position="1"/>
        <end position="316"/>
    </location>
</feature>
<feature type="binding site" evidence="1">
    <location>
        <begin position="35"/>
        <end position="37"/>
    </location>
    <ligand>
        <name>S-adenosyl-L-methionine</name>
        <dbReference type="ChEBI" id="CHEBI:59789"/>
    </ligand>
</feature>
<feature type="binding site" evidence="1">
    <location>
        <position position="55"/>
    </location>
    <ligand>
        <name>S-adenosyl-L-methionine</name>
        <dbReference type="ChEBI" id="CHEBI:59789"/>
    </ligand>
</feature>
<feature type="binding site" evidence="1">
    <location>
        <position position="84"/>
    </location>
    <ligand>
        <name>S-adenosyl-L-methionine</name>
        <dbReference type="ChEBI" id="CHEBI:59789"/>
    </ligand>
</feature>
<feature type="binding site" evidence="1">
    <location>
        <position position="105"/>
    </location>
    <ligand>
        <name>S-adenosyl-L-methionine</name>
        <dbReference type="ChEBI" id="CHEBI:59789"/>
    </ligand>
</feature>
<feature type="binding site" evidence="1">
    <location>
        <position position="112"/>
    </location>
    <ligand>
        <name>S-adenosyl-L-methionine</name>
        <dbReference type="ChEBI" id="CHEBI:59789"/>
    </ligand>
</feature>
<organism>
    <name type="scientific">Streptococcus pyogenes serotype M28 (strain MGAS6180)</name>
    <dbReference type="NCBI Taxonomy" id="319701"/>
    <lineage>
        <taxon>Bacteria</taxon>
        <taxon>Bacillati</taxon>
        <taxon>Bacillota</taxon>
        <taxon>Bacilli</taxon>
        <taxon>Lactobacillales</taxon>
        <taxon>Streptococcaceae</taxon>
        <taxon>Streptococcus</taxon>
    </lineage>
</organism>
<protein>
    <recommendedName>
        <fullName evidence="1">Ribosomal RNA small subunit methyltransferase H</fullName>
        <ecNumber evidence="1">2.1.1.199</ecNumber>
    </recommendedName>
    <alternativeName>
        <fullName evidence="1">16S rRNA m(4)C1402 methyltransferase</fullName>
    </alternativeName>
    <alternativeName>
        <fullName evidence="1">rRNA (cytosine-N(4)-)-methyltransferase RsmH</fullName>
    </alternativeName>
</protein>